<proteinExistence type="inferred from homology"/>
<evidence type="ECO:0000255" key="1">
    <source>
        <dbReference type="HAMAP-Rule" id="MF_00260"/>
    </source>
</evidence>
<feature type="chain" id="PRO_0000304294" description="Porphobilinogen deaminase">
    <location>
        <begin position="1"/>
        <end position="304"/>
    </location>
</feature>
<feature type="modified residue" description="S-(dipyrrolylmethanemethyl)cysteine" evidence="1">
    <location>
        <position position="240"/>
    </location>
</feature>
<accession>Q5GVL2</accession>
<sequence>MTTLRIATRKSPLALWQSEHVAAALRQHHPGLEVVLVPMSTRGDEVLDRSLAAIGDKGLFLKELELAMLRGDADCAVHSFKDVPMELDDPFVLPAILERGDPADALVSNLYASLQALPLGARVGTSSLRRQAQLRAARPDLELIDLRGNVNTRLAKLDNGGYDAIVLACAGLQRLGLDERISARLDAPEWLPAPAQGAVAVECRGDDARIHSLLAVLDAGRTRACVEAERAMNRALHGSCHVPVAALARWEGEGLFLQGMVGSASDGRLIHADAHGSADDTQDLGRRVAQGLFDKGAAQLLAAL</sequence>
<organism>
    <name type="scientific">Xanthomonas oryzae pv. oryzae (strain KACC10331 / KXO85)</name>
    <dbReference type="NCBI Taxonomy" id="291331"/>
    <lineage>
        <taxon>Bacteria</taxon>
        <taxon>Pseudomonadati</taxon>
        <taxon>Pseudomonadota</taxon>
        <taxon>Gammaproteobacteria</taxon>
        <taxon>Lysobacterales</taxon>
        <taxon>Lysobacteraceae</taxon>
        <taxon>Xanthomonas</taxon>
    </lineage>
</organism>
<protein>
    <recommendedName>
        <fullName evidence="1">Porphobilinogen deaminase</fullName>
        <shortName evidence="1">PBG</shortName>
        <ecNumber evidence="1">2.5.1.61</ecNumber>
    </recommendedName>
    <alternativeName>
        <fullName evidence="1">Hydroxymethylbilane synthase</fullName>
        <shortName evidence="1">HMBS</shortName>
    </alternativeName>
    <alternativeName>
        <fullName evidence="1">Pre-uroporphyrinogen synthase</fullName>
    </alternativeName>
</protein>
<name>HEM3_XANOR</name>
<dbReference type="EC" id="2.5.1.61" evidence="1"/>
<dbReference type="EMBL" id="AE013598">
    <property type="protein sequence ID" value="AAW77261.1"/>
    <property type="molecule type" value="Genomic_DNA"/>
</dbReference>
<dbReference type="SMR" id="Q5GVL2"/>
<dbReference type="STRING" id="291331.XOO4007"/>
<dbReference type="KEGG" id="xoo:XOO4007"/>
<dbReference type="PATRIC" id="fig|291331.8.peg.4438"/>
<dbReference type="HOGENOM" id="CLU_019704_0_2_6"/>
<dbReference type="UniPathway" id="UPA00251">
    <property type="reaction ID" value="UER00319"/>
</dbReference>
<dbReference type="Proteomes" id="UP000006735">
    <property type="component" value="Chromosome"/>
</dbReference>
<dbReference type="GO" id="GO:0005737">
    <property type="term" value="C:cytoplasm"/>
    <property type="evidence" value="ECO:0007669"/>
    <property type="project" value="TreeGrafter"/>
</dbReference>
<dbReference type="GO" id="GO:0004418">
    <property type="term" value="F:hydroxymethylbilane synthase activity"/>
    <property type="evidence" value="ECO:0007669"/>
    <property type="project" value="UniProtKB-UniRule"/>
</dbReference>
<dbReference type="GO" id="GO:0006782">
    <property type="term" value="P:protoporphyrinogen IX biosynthetic process"/>
    <property type="evidence" value="ECO:0007669"/>
    <property type="project" value="UniProtKB-UniRule"/>
</dbReference>
<dbReference type="CDD" id="cd13646">
    <property type="entry name" value="PBP2_EcHMBS_like"/>
    <property type="match status" value="1"/>
</dbReference>
<dbReference type="FunFam" id="3.40.190.10:FF:000004">
    <property type="entry name" value="Porphobilinogen deaminase"/>
    <property type="match status" value="1"/>
</dbReference>
<dbReference type="FunFam" id="3.40.190.10:FF:000005">
    <property type="entry name" value="Porphobilinogen deaminase"/>
    <property type="match status" value="1"/>
</dbReference>
<dbReference type="Gene3D" id="3.40.190.10">
    <property type="entry name" value="Periplasmic binding protein-like II"/>
    <property type="match status" value="2"/>
</dbReference>
<dbReference type="Gene3D" id="3.30.160.40">
    <property type="entry name" value="Porphobilinogen deaminase, C-terminal domain"/>
    <property type="match status" value="1"/>
</dbReference>
<dbReference type="HAMAP" id="MF_00260">
    <property type="entry name" value="Porphobil_deam"/>
    <property type="match status" value="1"/>
</dbReference>
<dbReference type="InterPro" id="IPR000860">
    <property type="entry name" value="HemC"/>
</dbReference>
<dbReference type="InterPro" id="IPR022419">
    <property type="entry name" value="Porphobilin_deaminase_cofac_BS"/>
</dbReference>
<dbReference type="InterPro" id="IPR022417">
    <property type="entry name" value="Porphobilin_deaminase_N"/>
</dbReference>
<dbReference type="InterPro" id="IPR022418">
    <property type="entry name" value="Porphobilinogen_deaminase_C"/>
</dbReference>
<dbReference type="InterPro" id="IPR036803">
    <property type="entry name" value="Porphobilinogen_deaminase_C_sf"/>
</dbReference>
<dbReference type="NCBIfam" id="TIGR00212">
    <property type="entry name" value="hemC"/>
    <property type="match status" value="1"/>
</dbReference>
<dbReference type="PANTHER" id="PTHR11557">
    <property type="entry name" value="PORPHOBILINOGEN DEAMINASE"/>
    <property type="match status" value="1"/>
</dbReference>
<dbReference type="PANTHER" id="PTHR11557:SF0">
    <property type="entry name" value="PORPHOBILINOGEN DEAMINASE"/>
    <property type="match status" value="1"/>
</dbReference>
<dbReference type="Pfam" id="PF01379">
    <property type="entry name" value="Porphobil_deam"/>
    <property type="match status" value="1"/>
</dbReference>
<dbReference type="Pfam" id="PF03900">
    <property type="entry name" value="Porphobil_deamC"/>
    <property type="match status" value="1"/>
</dbReference>
<dbReference type="PIRSF" id="PIRSF001438">
    <property type="entry name" value="4pyrrol_synth_OHMeBilane_synth"/>
    <property type="match status" value="1"/>
</dbReference>
<dbReference type="PRINTS" id="PR00151">
    <property type="entry name" value="PORPHBDMNASE"/>
</dbReference>
<dbReference type="SUPFAM" id="SSF53850">
    <property type="entry name" value="Periplasmic binding protein-like II"/>
    <property type="match status" value="1"/>
</dbReference>
<dbReference type="SUPFAM" id="SSF54782">
    <property type="entry name" value="Porphobilinogen deaminase (hydroxymethylbilane synthase), C-terminal domain"/>
    <property type="match status" value="1"/>
</dbReference>
<dbReference type="PROSITE" id="PS00533">
    <property type="entry name" value="PORPHOBILINOGEN_DEAM"/>
    <property type="match status" value="1"/>
</dbReference>
<keyword id="KW-0627">Porphyrin biosynthesis</keyword>
<keyword id="KW-1185">Reference proteome</keyword>
<keyword id="KW-0808">Transferase</keyword>
<gene>
    <name evidence="1" type="primary">hemC</name>
    <name type="ordered locus">XOO4007</name>
</gene>
<reference key="1">
    <citation type="journal article" date="2005" name="Nucleic Acids Res.">
        <title>The genome sequence of Xanthomonas oryzae pathovar oryzae KACC10331, the bacterial blight pathogen of rice.</title>
        <authorList>
            <person name="Lee B.-M."/>
            <person name="Park Y.-J."/>
            <person name="Park D.-S."/>
            <person name="Kang H.-W."/>
            <person name="Kim J.-G."/>
            <person name="Song E.-S."/>
            <person name="Park I.-C."/>
            <person name="Yoon U.-H."/>
            <person name="Hahn J.-H."/>
            <person name="Koo B.-S."/>
            <person name="Lee G.-B."/>
            <person name="Kim H."/>
            <person name="Park H.-S."/>
            <person name="Yoon K.-O."/>
            <person name="Kim J.-H."/>
            <person name="Jung C.-H."/>
            <person name="Koh N.-H."/>
            <person name="Seo J.-S."/>
            <person name="Go S.-J."/>
        </authorList>
    </citation>
    <scope>NUCLEOTIDE SEQUENCE [LARGE SCALE GENOMIC DNA]</scope>
    <source>
        <strain>KACC10331 / KXO85</strain>
    </source>
</reference>
<comment type="function">
    <text evidence="1">Tetrapolymerization of the monopyrrole PBG into the hydroxymethylbilane pre-uroporphyrinogen in several discrete steps.</text>
</comment>
<comment type="catalytic activity">
    <reaction evidence="1">
        <text>4 porphobilinogen + H2O = hydroxymethylbilane + 4 NH4(+)</text>
        <dbReference type="Rhea" id="RHEA:13185"/>
        <dbReference type="ChEBI" id="CHEBI:15377"/>
        <dbReference type="ChEBI" id="CHEBI:28938"/>
        <dbReference type="ChEBI" id="CHEBI:57845"/>
        <dbReference type="ChEBI" id="CHEBI:58126"/>
        <dbReference type="EC" id="2.5.1.61"/>
    </reaction>
</comment>
<comment type="cofactor">
    <cofactor evidence="1">
        <name>dipyrromethane</name>
        <dbReference type="ChEBI" id="CHEBI:60342"/>
    </cofactor>
    <text evidence="1">Binds 1 dipyrromethane group covalently.</text>
</comment>
<comment type="pathway">
    <text evidence="1">Porphyrin-containing compound metabolism; protoporphyrin-IX biosynthesis; coproporphyrinogen-III from 5-aminolevulinate: step 2/4.</text>
</comment>
<comment type="subunit">
    <text evidence="1">Monomer.</text>
</comment>
<comment type="miscellaneous">
    <text evidence="1">The porphobilinogen subunits are added to the dipyrromethane group.</text>
</comment>
<comment type="similarity">
    <text evidence="1">Belongs to the HMBS family.</text>
</comment>